<reference key="1">
    <citation type="journal article" date="2008" name="PLoS ONE">
        <title>Genome biology of Actinobacillus pleuropneumoniae JL03, an isolate of serotype 3 prevalent in China.</title>
        <authorList>
            <person name="Xu Z."/>
            <person name="Zhou Y."/>
            <person name="Li L."/>
            <person name="Zhou R."/>
            <person name="Xiao S."/>
            <person name="Wan Y."/>
            <person name="Zhang S."/>
            <person name="Wang K."/>
            <person name="Li W."/>
            <person name="Li L."/>
            <person name="Jin H."/>
            <person name="Kang M."/>
            <person name="Dalai B."/>
            <person name="Li T."/>
            <person name="Liu L."/>
            <person name="Cheng Y."/>
            <person name="Zhang L."/>
            <person name="Xu T."/>
            <person name="Zheng H."/>
            <person name="Pu S."/>
            <person name="Wang B."/>
            <person name="Gu W."/>
            <person name="Zhang X.L."/>
            <person name="Zhu G.-F."/>
            <person name="Wang S."/>
            <person name="Zhao G.-P."/>
            <person name="Chen H."/>
        </authorList>
    </citation>
    <scope>NUCLEOTIDE SEQUENCE [LARGE SCALE GENOMIC DNA]</scope>
    <source>
        <strain>JL03</strain>
    </source>
</reference>
<proteinExistence type="inferred from homology"/>
<feature type="chain" id="PRO_1000135860" description="Exoribonuclease 2">
    <location>
        <begin position="1"/>
        <end position="658"/>
    </location>
</feature>
<feature type="domain" description="RNB" evidence="1">
    <location>
        <begin position="189"/>
        <end position="530"/>
    </location>
</feature>
<feature type="domain" description="S1 motif" evidence="2">
    <location>
        <begin position="576"/>
        <end position="658"/>
    </location>
</feature>
<evidence type="ECO:0000255" key="1"/>
<evidence type="ECO:0000255" key="2">
    <source>
        <dbReference type="HAMAP-Rule" id="MF_01036"/>
    </source>
</evidence>
<gene>
    <name evidence="2" type="primary">rnb</name>
    <name type="ordered locus">APJL_0759</name>
</gene>
<name>RNB_ACTPJ</name>
<accession>B0BP37</accession>
<protein>
    <recommendedName>
        <fullName evidence="2">Exoribonuclease 2</fullName>
        <ecNumber evidence="2">3.1.13.1</ecNumber>
    </recommendedName>
    <alternativeName>
        <fullName evidence="2">Exoribonuclease II</fullName>
        <shortName evidence="2">RNase II</shortName>
        <shortName evidence="2">Ribonuclease II</shortName>
    </alternativeName>
</protein>
<comment type="function">
    <text evidence="2">Involved in mRNA degradation. Hydrolyzes single-stranded polyribonucleotides processively in the 3' to 5' direction.</text>
</comment>
<comment type="catalytic activity">
    <reaction evidence="2">
        <text>Exonucleolytic cleavage in the 3'- to 5'-direction to yield nucleoside 5'-phosphates.</text>
        <dbReference type="EC" id="3.1.13.1"/>
    </reaction>
</comment>
<comment type="subcellular location">
    <subcellularLocation>
        <location evidence="2">Cytoplasm</location>
    </subcellularLocation>
</comment>
<comment type="similarity">
    <text evidence="2">Belongs to the RNR ribonuclease family. RNase II subfamily.</text>
</comment>
<keyword id="KW-0963">Cytoplasm</keyword>
<keyword id="KW-0269">Exonuclease</keyword>
<keyword id="KW-0378">Hydrolase</keyword>
<keyword id="KW-0540">Nuclease</keyword>
<keyword id="KW-0694">RNA-binding</keyword>
<dbReference type="EC" id="3.1.13.1" evidence="2"/>
<dbReference type="EMBL" id="CP000687">
    <property type="protein sequence ID" value="ABY69322.1"/>
    <property type="molecule type" value="Genomic_DNA"/>
</dbReference>
<dbReference type="RefSeq" id="WP_012262950.1">
    <property type="nucleotide sequence ID" value="NC_010278.1"/>
</dbReference>
<dbReference type="SMR" id="B0BP37"/>
<dbReference type="KEGG" id="apj:APJL_0759"/>
<dbReference type="HOGENOM" id="CLU_002333_7_3_6"/>
<dbReference type="Proteomes" id="UP000008547">
    <property type="component" value="Chromosome"/>
</dbReference>
<dbReference type="GO" id="GO:0005829">
    <property type="term" value="C:cytosol"/>
    <property type="evidence" value="ECO:0007669"/>
    <property type="project" value="TreeGrafter"/>
</dbReference>
<dbReference type="GO" id="GO:0008859">
    <property type="term" value="F:exoribonuclease II activity"/>
    <property type="evidence" value="ECO:0007669"/>
    <property type="project" value="UniProtKB-UniRule"/>
</dbReference>
<dbReference type="GO" id="GO:0003723">
    <property type="term" value="F:RNA binding"/>
    <property type="evidence" value="ECO:0007669"/>
    <property type="project" value="UniProtKB-KW"/>
</dbReference>
<dbReference type="GO" id="GO:0006402">
    <property type="term" value="P:mRNA catabolic process"/>
    <property type="evidence" value="ECO:0007669"/>
    <property type="project" value="UniProtKB-UniRule"/>
</dbReference>
<dbReference type="Gene3D" id="2.40.50.640">
    <property type="match status" value="1"/>
</dbReference>
<dbReference type="Gene3D" id="2.40.50.140">
    <property type="entry name" value="Nucleic acid-binding proteins"/>
    <property type="match status" value="2"/>
</dbReference>
<dbReference type="HAMAP" id="MF_01036">
    <property type="entry name" value="RNase_II"/>
    <property type="match status" value="1"/>
</dbReference>
<dbReference type="InterPro" id="IPR011129">
    <property type="entry name" value="CSD"/>
</dbReference>
<dbReference type="InterPro" id="IPR012340">
    <property type="entry name" value="NA-bd_OB-fold"/>
</dbReference>
<dbReference type="InterPro" id="IPR013223">
    <property type="entry name" value="RNase_B_OB_dom"/>
</dbReference>
<dbReference type="InterPro" id="IPR011804">
    <property type="entry name" value="RNase_II"/>
</dbReference>
<dbReference type="InterPro" id="IPR001900">
    <property type="entry name" value="RNase_II/R"/>
</dbReference>
<dbReference type="InterPro" id="IPR004476">
    <property type="entry name" value="RNase_II/RNase_R"/>
</dbReference>
<dbReference type="InterPro" id="IPR050180">
    <property type="entry name" value="RNR_Ribonuclease"/>
</dbReference>
<dbReference type="InterPro" id="IPR003029">
    <property type="entry name" value="S1_domain"/>
</dbReference>
<dbReference type="NCBIfam" id="TIGR00358">
    <property type="entry name" value="3_prime_RNase"/>
    <property type="match status" value="1"/>
</dbReference>
<dbReference type="NCBIfam" id="NF003455">
    <property type="entry name" value="PRK05054.1"/>
    <property type="match status" value="1"/>
</dbReference>
<dbReference type="NCBIfam" id="TIGR02062">
    <property type="entry name" value="RNase_B"/>
    <property type="match status" value="1"/>
</dbReference>
<dbReference type="PANTHER" id="PTHR23355:SF37">
    <property type="entry name" value="EXORIBONUCLEASE 2"/>
    <property type="match status" value="1"/>
</dbReference>
<dbReference type="PANTHER" id="PTHR23355">
    <property type="entry name" value="RIBONUCLEASE"/>
    <property type="match status" value="1"/>
</dbReference>
<dbReference type="Pfam" id="PF08206">
    <property type="entry name" value="OB_RNB"/>
    <property type="match status" value="1"/>
</dbReference>
<dbReference type="Pfam" id="PF00773">
    <property type="entry name" value="RNB"/>
    <property type="match status" value="1"/>
</dbReference>
<dbReference type="Pfam" id="PF00575">
    <property type="entry name" value="S1"/>
    <property type="match status" value="1"/>
</dbReference>
<dbReference type="SMART" id="SM00357">
    <property type="entry name" value="CSP"/>
    <property type="match status" value="1"/>
</dbReference>
<dbReference type="SMART" id="SM00955">
    <property type="entry name" value="RNB"/>
    <property type="match status" value="1"/>
</dbReference>
<dbReference type="SMART" id="SM00316">
    <property type="entry name" value="S1"/>
    <property type="match status" value="2"/>
</dbReference>
<dbReference type="SUPFAM" id="SSF50249">
    <property type="entry name" value="Nucleic acid-binding proteins"/>
    <property type="match status" value="4"/>
</dbReference>
<sequence>MFQNNPLLAQLKQQIEANKEYVEGTVKASDKAFGFLECDKKSYFIPPMEMKKVMHGDKVKAVVKREDDKEQVEIDSLLEPMLDRFIAQVRFNKDNKLQLIVDHPSIKNIIPANTHKKVTETLESGDWVVAQLKTHPLRDDRFLFAQVTQFICKADDNFAPWWVTLARHEQPREPVANEKSYELHDELDREDLTSLYFTTIDSPSTQDMDDALYIEPIKQGEVQTGWRLVVAIADPTAYIPENSNLEKAARQRCFTNYLPGFNIPMLPRELSDDLCSLVPNEKRPALVGYIETDLAGNITGDTRFVSAWVESKAKLAYDNVSDYLEQVENAWQPESAETKQQIDWLHQFTLARIEWRRNNALLFKESGDYSFELNEDGSVRDIHVEYRRIANQMIEESMIIANICCAKFLADNAKTGVFNTHAGFDPKNLESAQKFLLDTLSTDENRDALTAFYAPEKLATLEGYCEMRRSIDEFPEKFLELRLRRYLTFAEFKSEVAPHLGLGISHYATWTSPIRKYGDMVNHRLIKQVLLGKQAKTVEEGILVRLQEARRQNRLVERDIADWLYARYLFPMVEQAVEFDCEIADVSRGGVRAKVIANGAQIFVPFSTLHDKKEEMEFRPEEIALYIKGEKAYQIGQAVKVKLTEVRLETRSIVGNII</sequence>
<organism>
    <name type="scientific">Actinobacillus pleuropneumoniae serotype 3 (strain JL03)</name>
    <dbReference type="NCBI Taxonomy" id="434271"/>
    <lineage>
        <taxon>Bacteria</taxon>
        <taxon>Pseudomonadati</taxon>
        <taxon>Pseudomonadota</taxon>
        <taxon>Gammaproteobacteria</taxon>
        <taxon>Pasteurellales</taxon>
        <taxon>Pasteurellaceae</taxon>
        <taxon>Actinobacillus</taxon>
    </lineage>
</organism>